<comment type="function">
    <text evidence="1">Transaldolase is important for the balance of metabolites in the pentose-phosphate pathway.</text>
</comment>
<comment type="catalytic activity">
    <reaction>
        <text>D-sedoheptulose 7-phosphate + D-glyceraldehyde 3-phosphate = D-erythrose 4-phosphate + beta-D-fructose 6-phosphate</text>
        <dbReference type="Rhea" id="RHEA:17053"/>
        <dbReference type="ChEBI" id="CHEBI:16897"/>
        <dbReference type="ChEBI" id="CHEBI:57483"/>
        <dbReference type="ChEBI" id="CHEBI:57634"/>
        <dbReference type="ChEBI" id="CHEBI:59776"/>
        <dbReference type="EC" id="2.2.1.2"/>
    </reaction>
</comment>
<comment type="pathway">
    <text>Carbohydrate degradation; pentose phosphate pathway; D-glyceraldehyde 3-phosphate and beta-D-fructose 6-phosphate from D-ribose 5-phosphate and D-xylulose 5-phosphate (non-oxidative stage): step 2/3.</text>
</comment>
<comment type="subunit">
    <text evidence="1">Homodimer.</text>
</comment>
<comment type="subcellular location">
    <subcellularLocation>
        <location evidence="2">Cytoplasm</location>
    </subcellularLocation>
</comment>
<comment type="similarity">
    <text evidence="2">Belongs to the transaldolase family. Type 1 subfamily.</text>
</comment>
<comment type="sequence caution" evidence="2">
    <conflict type="erroneous initiation">
        <sequence resource="EMBL-CDS" id="AAM50780"/>
    </conflict>
</comment>
<sequence length="331" mass="36734">MGSDRTLKKQKMSVLQELKKITTIVADTGDFEAINIYKPTDATTNPSLILSASSMERYQPLVQKAVEYAKGKKGSVSEQVAEAMDYLCVLFGTEILKVVPGRVSTEIDARLSFDTKKSVEKALKLIALYKSLGVDKERILIKLASTWEGIKAAEILENEHGVHCNLTLLFSFAQAVACAEAGVTLISPFVGRILDWYVANTDTKKFEALKDPGVISVTNIYNYYKKFGYKTLVMGASFRNVGEIKALAGCDLLTISPALLKELENETESVVTYLSVSNAKLQDIEKITVDESRFRWLLNEDAMATDKLSEGIRKFAVDTVKLENLIKTYLK</sequence>
<feature type="chain" id="PRO_0000173569" description="Probable transaldolase">
    <location>
        <begin position="1"/>
        <end position="331"/>
    </location>
</feature>
<feature type="active site" description="Schiff-base intermediate with substrate" evidence="1">
    <location>
        <position position="142"/>
    </location>
</feature>
<reference key="1">
    <citation type="journal article" date="2000" name="Science">
        <title>The genome sequence of Drosophila melanogaster.</title>
        <authorList>
            <person name="Adams M.D."/>
            <person name="Celniker S.E."/>
            <person name="Holt R.A."/>
            <person name="Evans C.A."/>
            <person name="Gocayne J.D."/>
            <person name="Amanatides P.G."/>
            <person name="Scherer S.E."/>
            <person name="Li P.W."/>
            <person name="Hoskins R.A."/>
            <person name="Galle R.F."/>
            <person name="George R.A."/>
            <person name="Lewis S.E."/>
            <person name="Richards S."/>
            <person name="Ashburner M."/>
            <person name="Henderson S.N."/>
            <person name="Sutton G.G."/>
            <person name="Wortman J.R."/>
            <person name="Yandell M.D."/>
            <person name="Zhang Q."/>
            <person name="Chen L.X."/>
            <person name="Brandon R.C."/>
            <person name="Rogers Y.-H.C."/>
            <person name="Blazej R.G."/>
            <person name="Champe M."/>
            <person name="Pfeiffer B.D."/>
            <person name="Wan K.H."/>
            <person name="Doyle C."/>
            <person name="Baxter E.G."/>
            <person name="Helt G."/>
            <person name="Nelson C.R."/>
            <person name="Miklos G.L.G."/>
            <person name="Abril J.F."/>
            <person name="Agbayani A."/>
            <person name="An H.-J."/>
            <person name="Andrews-Pfannkoch C."/>
            <person name="Baldwin D."/>
            <person name="Ballew R.M."/>
            <person name="Basu A."/>
            <person name="Baxendale J."/>
            <person name="Bayraktaroglu L."/>
            <person name="Beasley E.M."/>
            <person name="Beeson K.Y."/>
            <person name="Benos P.V."/>
            <person name="Berman B.P."/>
            <person name="Bhandari D."/>
            <person name="Bolshakov S."/>
            <person name="Borkova D."/>
            <person name="Botchan M.R."/>
            <person name="Bouck J."/>
            <person name="Brokstein P."/>
            <person name="Brottier P."/>
            <person name="Burtis K.C."/>
            <person name="Busam D.A."/>
            <person name="Butler H."/>
            <person name="Cadieu E."/>
            <person name="Center A."/>
            <person name="Chandra I."/>
            <person name="Cherry J.M."/>
            <person name="Cawley S."/>
            <person name="Dahlke C."/>
            <person name="Davenport L.B."/>
            <person name="Davies P."/>
            <person name="de Pablos B."/>
            <person name="Delcher A."/>
            <person name="Deng Z."/>
            <person name="Mays A.D."/>
            <person name="Dew I."/>
            <person name="Dietz S.M."/>
            <person name="Dodson K."/>
            <person name="Doup L.E."/>
            <person name="Downes M."/>
            <person name="Dugan-Rocha S."/>
            <person name="Dunkov B.C."/>
            <person name="Dunn P."/>
            <person name="Durbin K.J."/>
            <person name="Evangelista C.C."/>
            <person name="Ferraz C."/>
            <person name="Ferriera S."/>
            <person name="Fleischmann W."/>
            <person name="Fosler C."/>
            <person name="Gabrielian A.E."/>
            <person name="Garg N.S."/>
            <person name="Gelbart W.M."/>
            <person name="Glasser K."/>
            <person name="Glodek A."/>
            <person name="Gong F."/>
            <person name="Gorrell J.H."/>
            <person name="Gu Z."/>
            <person name="Guan P."/>
            <person name="Harris M."/>
            <person name="Harris N.L."/>
            <person name="Harvey D.A."/>
            <person name="Heiman T.J."/>
            <person name="Hernandez J.R."/>
            <person name="Houck J."/>
            <person name="Hostin D."/>
            <person name="Houston K.A."/>
            <person name="Howland T.J."/>
            <person name="Wei M.-H."/>
            <person name="Ibegwam C."/>
            <person name="Jalali M."/>
            <person name="Kalush F."/>
            <person name="Karpen G.H."/>
            <person name="Ke Z."/>
            <person name="Kennison J.A."/>
            <person name="Ketchum K.A."/>
            <person name="Kimmel B.E."/>
            <person name="Kodira C.D."/>
            <person name="Kraft C.L."/>
            <person name="Kravitz S."/>
            <person name="Kulp D."/>
            <person name="Lai Z."/>
            <person name="Lasko P."/>
            <person name="Lei Y."/>
            <person name="Levitsky A.A."/>
            <person name="Li J.H."/>
            <person name="Li Z."/>
            <person name="Liang Y."/>
            <person name="Lin X."/>
            <person name="Liu X."/>
            <person name="Mattei B."/>
            <person name="McIntosh T.C."/>
            <person name="McLeod M.P."/>
            <person name="McPherson D."/>
            <person name="Merkulov G."/>
            <person name="Milshina N.V."/>
            <person name="Mobarry C."/>
            <person name="Morris J."/>
            <person name="Moshrefi A."/>
            <person name="Mount S.M."/>
            <person name="Moy M."/>
            <person name="Murphy B."/>
            <person name="Murphy L."/>
            <person name="Muzny D.M."/>
            <person name="Nelson D.L."/>
            <person name="Nelson D.R."/>
            <person name="Nelson K.A."/>
            <person name="Nixon K."/>
            <person name="Nusskern D.R."/>
            <person name="Pacleb J.M."/>
            <person name="Palazzolo M."/>
            <person name="Pittman G.S."/>
            <person name="Pan S."/>
            <person name="Pollard J."/>
            <person name="Puri V."/>
            <person name="Reese M.G."/>
            <person name="Reinert K."/>
            <person name="Remington K."/>
            <person name="Saunders R.D.C."/>
            <person name="Scheeler F."/>
            <person name="Shen H."/>
            <person name="Shue B.C."/>
            <person name="Siden-Kiamos I."/>
            <person name="Simpson M."/>
            <person name="Skupski M.P."/>
            <person name="Smith T.J."/>
            <person name="Spier E."/>
            <person name="Spradling A.C."/>
            <person name="Stapleton M."/>
            <person name="Strong R."/>
            <person name="Sun E."/>
            <person name="Svirskas R."/>
            <person name="Tector C."/>
            <person name="Turner R."/>
            <person name="Venter E."/>
            <person name="Wang A.H."/>
            <person name="Wang X."/>
            <person name="Wang Z.-Y."/>
            <person name="Wassarman D.A."/>
            <person name="Weinstock G.M."/>
            <person name="Weissenbach J."/>
            <person name="Williams S.M."/>
            <person name="Woodage T."/>
            <person name="Worley K.C."/>
            <person name="Wu D."/>
            <person name="Yang S."/>
            <person name="Yao Q.A."/>
            <person name="Ye J."/>
            <person name="Yeh R.-F."/>
            <person name="Zaveri J.S."/>
            <person name="Zhan M."/>
            <person name="Zhang G."/>
            <person name="Zhao Q."/>
            <person name="Zheng L."/>
            <person name="Zheng X.H."/>
            <person name="Zhong F.N."/>
            <person name="Zhong W."/>
            <person name="Zhou X."/>
            <person name="Zhu S.C."/>
            <person name="Zhu X."/>
            <person name="Smith H.O."/>
            <person name="Gibbs R.A."/>
            <person name="Myers E.W."/>
            <person name="Rubin G.M."/>
            <person name="Venter J.C."/>
        </authorList>
    </citation>
    <scope>NUCLEOTIDE SEQUENCE [LARGE SCALE GENOMIC DNA]</scope>
    <source>
        <strain>Berkeley</strain>
    </source>
</reference>
<reference key="2">
    <citation type="journal article" date="2002" name="Genome Biol.">
        <title>Annotation of the Drosophila melanogaster euchromatic genome: a systematic review.</title>
        <authorList>
            <person name="Misra S."/>
            <person name="Crosby M.A."/>
            <person name="Mungall C.J."/>
            <person name="Matthews B.B."/>
            <person name="Campbell K.S."/>
            <person name="Hradecky P."/>
            <person name="Huang Y."/>
            <person name="Kaminker J.S."/>
            <person name="Millburn G.H."/>
            <person name="Prochnik S.E."/>
            <person name="Smith C.D."/>
            <person name="Tupy J.L."/>
            <person name="Whitfield E.J."/>
            <person name="Bayraktaroglu L."/>
            <person name="Berman B.P."/>
            <person name="Bettencourt B.R."/>
            <person name="Celniker S.E."/>
            <person name="de Grey A.D.N.J."/>
            <person name="Drysdale R.A."/>
            <person name="Harris N.L."/>
            <person name="Richter J."/>
            <person name="Russo S."/>
            <person name="Schroeder A.J."/>
            <person name="Shu S.Q."/>
            <person name="Stapleton M."/>
            <person name="Yamada C."/>
            <person name="Ashburner M."/>
            <person name="Gelbart W.M."/>
            <person name="Rubin G.M."/>
            <person name="Lewis S.E."/>
        </authorList>
    </citation>
    <scope>GENOME REANNOTATION</scope>
    <source>
        <strain>Berkeley</strain>
    </source>
</reference>
<reference key="3">
    <citation type="journal article" date="2002" name="Genome Biol.">
        <title>A Drosophila full-length cDNA resource.</title>
        <authorList>
            <person name="Stapleton M."/>
            <person name="Carlson J.W."/>
            <person name="Brokstein P."/>
            <person name="Yu C."/>
            <person name="Champe M."/>
            <person name="George R.A."/>
            <person name="Guarin H."/>
            <person name="Kronmiller B."/>
            <person name="Pacleb J.M."/>
            <person name="Park S."/>
            <person name="Wan K.H."/>
            <person name="Rubin G.M."/>
            <person name="Celniker S.E."/>
        </authorList>
    </citation>
    <scope>NUCLEOTIDE SEQUENCE [LARGE SCALE MRNA] OF 2-331</scope>
    <source>
        <strain>Berkeley</strain>
        <tissue>Embryo</tissue>
    </source>
</reference>
<proteinExistence type="evidence at transcript level"/>
<dbReference type="EC" id="2.2.1.2"/>
<dbReference type="EMBL" id="AE013599">
    <property type="protein sequence ID" value="AAF47106.2"/>
    <property type="molecule type" value="Genomic_DNA"/>
</dbReference>
<dbReference type="EMBL" id="AY118920">
    <property type="protein sequence ID" value="AAM50780.1"/>
    <property type="status" value="ALT_INIT"/>
    <property type="molecule type" value="mRNA"/>
</dbReference>
<dbReference type="RefSeq" id="NP_523835.2">
    <property type="nucleotide sequence ID" value="NM_079111.3"/>
</dbReference>
<dbReference type="SMR" id="Q9W1G0"/>
<dbReference type="BioGRID" id="63394">
    <property type="interactions" value="4"/>
</dbReference>
<dbReference type="FunCoup" id="Q9W1G0">
    <property type="interactions" value="1346"/>
</dbReference>
<dbReference type="IntAct" id="Q9W1G0">
    <property type="interactions" value="22"/>
</dbReference>
<dbReference type="STRING" id="7227.FBpp0072050"/>
<dbReference type="PaxDb" id="7227-FBpp0072050"/>
<dbReference type="DNASU" id="37804"/>
<dbReference type="EnsemblMetazoa" id="FBtr0072141">
    <property type="protein sequence ID" value="FBpp0072050"/>
    <property type="gene ID" value="FBgn0023477"/>
</dbReference>
<dbReference type="GeneID" id="37804"/>
<dbReference type="KEGG" id="dme:Dmel_CG2827"/>
<dbReference type="UCSC" id="CG2827-RA">
    <property type="organism name" value="d. melanogaster"/>
</dbReference>
<dbReference type="AGR" id="FB:FBgn0023477"/>
<dbReference type="CTD" id="37804"/>
<dbReference type="FlyBase" id="FBgn0023477">
    <property type="gene designation" value="Taldo"/>
</dbReference>
<dbReference type="VEuPathDB" id="VectorBase:FBgn0023477"/>
<dbReference type="eggNOG" id="KOG2772">
    <property type="taxonomic scope" value="Eukaryota"/>
</dbReference>
<dbReference type="GeneTree" id="ENSGT00390000017361"/>
<dbReference type="HOGENOM" id="CLU_047470_0_1_1"/>
<dbReference type="InParanoid" id="Q9W1G0"/>
<dbReference type="OMA" id="THAEFLW"/>
<dbReference type="OrthoDB" id="2015515at2759"/>
<dbReference type="PhylomeDB" id="Q9W1G0"/>
<dbReference type="Reactome" id="R-DME-163754">
    <property type="pathway name" value="Insulin effects increased synthesis of Xylulose-5-Phosphate"/>
</dbReference>
<dbReference type="Reactome" id="R-DME-71336">
    <property type="pathway name" value="Pentose phosphate pathway"/>
</dbReference>
<dbReference type="UniPathway" id="UPA00115">
    <property type="reaction ID" value="UER00414"/>
</dbReference>
<dbReference type="BioGRID-ORCS" id="37804">
    <property type="hits" value="0 hits in 1 CRISPR screen"/>
</dbReference>
<dbReference type="ChiTaRS" id="Taldo">
    <property type="organism name" value="fly"/>
</dbReference>
<dbReference type="GenomeRNAi" id="37804"/>
<dbReference type="PRO" id="PR:Q9W1G0"/>
<dbReference type="Proteomes" id="UP000000803">
    <property type="component" value="Chromosome 2R"/>
</dbReference>
<dbReference type="Bgee" id="FBgn0023477">
    <property type="expression patterns" value="Expressed in fat body cell in male reproductive gland and 201 other cell types or tissues"/>
</dbReference>
<dbReference type="ExpressionAtlas" id="Q9W1G0">
    <property type="expression patterns" value="baseline and differential"/>
</dbReference>
<dbReference type="GO" id="GO:0005829">
    <property type="term" value="C:cytosol"/>
    <property type="evidence" value="ECO:0000314"/>
    <property type="project" value="FlyBase"/>
</dbReference>
<dbReference type="GO" id="GO:0005634">
    <property type="term" value="C:nucleus"/>
    <property type="evidence" value="ECO:0000318"/>
    <property type="project" value="GO_Central"/>
</dbReference>
<dbReference type="GO" id="GO:0004801">
    <property type="term" value="F:transaldolase activity"/>
    <property type="evidence" value="ECO:0000314"/>
    <property type="project" value="FlyBase"/>
</dbReference>
<dbReference type="GO" id="GO:0005975">
    <property type="term" value="P:carbohydrate metabolic process"/>
    <property type="evidence" value="ECO:0007669"/>
    <property type="project" value="InterPro"/>
</dbReference>
<dbReference type="GO" id="GO:0009052">
    <property type="term" value="P:pentose-phosphate shunt, non-oxidative branch"/>
    <property type="evidence" value="ECO:0000250"/>
    <property type="project" value="FlyBase"/>
</dbReference>
<dbReference type="CDD" id="cd00957">
    <property type="entry name" value="Transaldolase_TalAB"/>
    <property type="match status" value="1"/>
</dbReference>
<dbReference type="FunFam" id="3.20.20.70:FF:000088">
    <property type="entry name" value="Transaldolase"/>
    <property type="match status" value="1"/>
</dbReference>
<dbReference type="Gene3D" id="3.20.20.70">
    <property type="entry name" value="Aldolase class I"/>
    <property type="match status" value="1"/>
</dbReference>
<dbReference type="HAMAP" id="MF_00492">
    <property type="entry name" value="Transaldolase_1"/>
    <property type="match status" value="1"/>
</dbReference>
<dbReference type="InterPro" id="IPR013785">
    <property type="entry name" value="Aldolase_TIM"/>
</dbReference>
<dbReference type="InterPro" id="IPR001585">
    <property type="entry name" value="TAL/FSA"/>
</dbReference>
<dbReference type="InterPro" id="IPR004730">
    <property type="entry name" value="Transaldolase_1"/>
</dbReference>
<dbReference type="InterPro" id="IPR018225">
    <property type="entry name" value="Transaldolase_AS"/>
</dbReference>
<dbReference type="NCBIfam" id="NF009001">
    <property type="entry name" value="PRK12346.1"/>
    <property type="match status" value="1"/>
</dbReference>
<dbReference type="NCBIfam" id="TIGR00874">
    <property type="entry name" value="talAB"/>
    <property type="match status" value="1"/>
</dbReference>
<dbReference type="PANTHER" id="PTHR10683">
    <property type="entry name" value="TRANSALDOLASE"/>
    <property type="match status" value="1"/>
</dbReference>
<dbReference type="PANTHER" id="PTHR10683:SF18">
    <property type="entry name" value="TRANSALDOLASE"/>
    <property type="match status" value="1"/>
</dbReference>
<dbReference type="Pfam" id="PF00923">
    <property type="entry name" value="TAL_FSA"/>
    <property type="match status" value="1"/>
</dbReference>
<dbReference type="SUPFAM" id="SSF51569">
    <property type="entry name" value="Aldolase"/>
    <property type="match status" value="1"/>
</dbReference>
<dbReference type="PROSITE" id="PS01054">
    <property type="entry name" value="TRANSALDOLASE_1"/>
    <property type="match status" value="1"/>
</dbReference>
<dbReference type="PROSITE" id="PS00958">
    <property type="entry name" value="TRANSALDOLASE_2"/>
    <property type="match status" value="1"/>
</dbReference>
<name>TALDO_DROME</name>
<accession>Q9W1G0</accession>
<protein>
    <recommendedName>
        <fullName>Probable transaldolase</fullName>
        <ecNumber>2.2.1.2</ecNumber>
    </recommendedName>
</protein>
<gene>
    <name evidence="3" type="primary">Taldo</name>
    <name evidence="3" type="synonym">Tal</name>
    <name evidence="3" type="ORF">CG2827</name>
</gene>
<organism>
    <name type="scientific">Drosophila melanogaster</name>
    <name type="common">Fruit fly</name>
    <dbReference type="NCBI Taxonomy" id="7227"/>
    <lineage>
        <taxon>Eukaryota</taxon>
        <taxon>Metazoa</taxon>
        <taxon>Ecdysozoa</taxon>
        <taxon>Arthropoda</taxon>
        <taxon>Hexapoda</taxon>
        <taxon>Insecta</taxon>
        <taxon>Pterygota</taxon>
        <taxon>Neoptera</taxon>
        <taxon>Endopterygota</taxon>
        <taxon>Diptera</taxon>
        <taxon>Brachycera</taxon>
        <taxon>Muscomorpha</taxon>
        <taxon>Ephydroidea</taxon>
        <taxon>Drosophilidae</taxon>
        <taxon>Drosophila</taxon>
        <taxon>Sophophora</taxon>
    </lineage>
</organism>
<keyword id="KW-0963">Cytoplasm</keyword>
<keyword id="KW-0570">Pentose shunt</keyword>
<keyword id="KW-1185">Reference proteome</keyword>
<keyword id="KW-0704">Schiff base</keyword>
<keyword id="KW-0808">Transferase</keyword>
<evidence type="ECO:0000250" key="1"/>
<evidence type="ECO:0000305" key="2"/>
<evidence type="ECO:0000312" key="3">
    <source>
        <dbReference type="FlyBase" id="FBgn0023477"/>
    </source>
</evidence>